<keyword id="KW-0963">Cytoplasm</keyword>
<keyword id="KW-0269">Exonuclease</keyword>
<keyword id="KW-0378">Hydrolase</keyword>
<keyword id="KW-0540">Nuclease</keyword>
<feature type="chain" id="PRO_1000122047" description="Exodeoxyribonuclease 7 large subunit">
    <location>
        <begin position="1"/>
        <end position="516"/>
    </location>
</feature>
<reference key="1">
    <citation type="journal article" date="2008" name="Genome Res.">
        <title>Chlamydia trachomatis: genome sequence analysis of lymphogranuloma venereum isolates.</title>
        <authorList>
            <person name="Thomson N.R."/>
            <person name="Holden M.T.G."/>
            <person name="Carder C."/>
            <person name="Lennard N."/>
            <person name="Lockey S.J."/>
            <person name="Marsh P."/>
            <person name="Skipp P."/>
            <person name="O'Connor C.D."/>
            <person name="Goodhead I."/>
            <person name="Norbertzcak H."/>
            <person name="Harris B."/>
            <person name="Ormond D."/>
            <person name="Rance R."/>
            <person name="Quail M.A."/>
            <person name="Parkhill J."/>
            <person name="Stephens R.S."/>
            <person name="Clarke I.N."/>
        </authorList>
    </citation>
    <scope>NUCLEOTIDE SEQUENCE [LARGE SCALE GENOMIC DNA]</scope>
    <source>
        <strain>UCH-1/proctitis</strain>
    </source>
</reference>
<name>EX7L_CHLTB</name>
<gene>
    <name evidence="1" type="primary">xseA</name>
    <name type="ordered locus">CTLon_0579</name>
</gene>
<sequence length="516" mass="58704">MSITSPPIEVSVLTDSIKNLLEKNFLRVVVKGELSNVSLQTSGHLYFAIKDSKAVLNGAFFHFRSKYFDRKPKDGDYVILHGKLTVYAPRGQYQIVAYALTFSGEGNLLQQFEERKQRLAAEGYFDPKRKKPLPSGARVIGVITSPTGAVIQDILRVLSRRCHQFQVILYPVTVQGATAAQEISQAIQFFNQNSMRVHALIIARGGGSIEDLWAFNEEELVKSIVASSIPIISAVGHETDFTLCDFASDVRAPTPSAAAEIVCKSSDQYRQELQNLRRYVSSHARQFIAAKKNLLTHWQRHLASVDFYHTAQQTLDYTRAALERGIETKLEYYKQRFAQYRRWLKSDVLIRIEKHLADLNQSLMLSIKNKIYTKKTSLNQLYTSCLKNELLNLQHRTQHSRNILSQLSRRLHIAIASSQQTHQECLVRLQNELSFTIQHLLTKAKERCQAIQEQASSLNPKNVLKRGFAQLFDFNKHFVIISAESLKQSDLVRVCLQDGEAVVSVKEVWLNNDKKG</sequence>
<comment type="function">
    <text evidence="1">Bidirectionally degrades single-stranded DNA into large acid-insoluble oligonucleotides, which are then degraded further into small acid-soluble oligonucleotides.</text>
</comment>
<comment type="catalytic activity">
    <reaction evidence="1">
        <text>Exonucleolytic cleavage in either 5'- to 3'- or 3'- to 5'-direction to yield nucleoside 5'-phosphates.</text>
        <dbReference type="EC" id="3.1.11.6"/>
    </reaction>
</comment>
<comment type="subunit">
    <text evidence="1">Heterooligomer composed of large and small subunits.</text>
</comment>
<comment type="subcellular location">
    <subcellularLocation>
        <location evidence="1">Cytoplasm</location>
    </subcellularLocation>
</comment>
<comment type="similarity">
    <text evidence="1">Belongs to the XseA family.</text>
</comment>
<accession>B0BBW1</accession>
<organism>
    <name type="scientific">Chlamydia trachomatis serovar L2b (strain UCH-1/proctitis)</name>
    <dbReference type="NCBI Taxonomy" id="471473"/>
    <lineage>
        <taxon>Bacteria</taxon>
        <taxon>Pseudomonadati</taxon>
        <taxon>Chlamydiota</taxon>
        <taxon>Chlamydiia</taxon>
        <taxon>Chlamydiales</taxon>
        <taxon>Chlamydiaceae</taxon>
        <taxon>Chlamydia/Chlamydophila group</taxon>
        <taxon>Chlamydia</taxon>
    </lineage>
</organism>
<proteinExistence type="inferred from homology"/>
<dbReference type="EC" id="3.1.11.6" evidence="1"/>
<dbReference type="EMBL" id="AM884177">
    <property type="protein sequence ID" value="CAP06976.1"/>
    <property type="molecule type" value="Genomic_DNA"/>
</dbReference>
<dbReference type="RefSeq" id="WP_009873731.1">
    <property type="nucleotide sequence ID" value="NC_010280.2"/>
</dbReference>
<dbReference type="SMR" id="B0BBW1"/>
<dbReference type="KEGG" id="ctl:CTLon_0579"/>
<dbReference type="HOGENOM" id="CLU_023625_3_1_0"/>
<dbReference type="Proteomes" id="UP001154401">
    <property type="component" value="Chromosome"/>
</dbReference>
<dbReference type="GO" id="GO:0005737">
    <property type="term" value="C:cytoplasm"/>
    <property type="evidence" value="ECO:0007669"/>
    <property type="project" value="UniProtKB-SubCell"/>
</dbReference>
<dbReference type="GO" id="GO:0009318">
    <property type="term" value="C:exodeoxyribonuclease VII complex"/>
    <property type="evidence" value="ECO:0007669"/>
    <property type="project" value="InterPro"/>
</dbReference>
<dbReference type="GO" id="GO:0008855">
    <property type="term" value="F:exodeoxyribonuclease VII activity"/>
    <property type="evidence" value="ECO:0007669"/>
    <property type="project" value="UniProtKB-UniRule"/>
</dbReference>
<dbReference type="GO" id="GO:0003676">
    <property type="term" value="F:nucleic acid binding"/>
    <property type="evidence" value="ECO:0007669"/>
    <property type="project" value="InterPro"/>
</dbReference>
<dbReference type="GO" id="GO:0006308">
    <property type="term" value="P:DNA catabolic process"/>
    <property type="evidence" value="ECO:0007669"/>
    <property type="project" value="UniProtKB-UniRule"/>
</dbReference>
<dbReference type="CDD" id="cd04489">
    <property type="entry name" value="ExoVII_LU_OBF"/>
    <property type="match status" value="1"/>
</dbReference>
<dbReference type="HAMAP" id="MF_00378">
    <property type="entry name" value="Exonuc_7_L"/>
    <property type="match status" value="1"/>
</dbReference>
<dbReference type="InterPro" id="IPR003753">
    <property type="entry name" value="Exonuc_VII_L"/>
</dbReference>
<dbReference type="InterPro" id="IPR020579">
    <property type="entry name" value="Exonuc_VII_lsu_C"/>
</dbReference>
<dbReference type="InterPro" id="IPR025824">
    <property type="entry name" value="OB-fold_nuc-bd_dom"/>
</dbReference>
<dbReference type="NCBIfam" id="TIGR00237">
    <property type="entry name" value="xseA"/>
    <property type="match status" value="1"/>
</dbReference>
<dbReference type="PANTHER" id="PTHR30008">
    <property type="entry name" value="EXODEOXYRIBONUCLEASE 7 LARGE SUBUNIT"/>
    <property type="match status" value="1"/>
</dbReference>
<dbReference type="PANTHER" id="PTHR30008:SF0">
    <property type="entry name" value="EXODEOXYRIBONUCLEASE 7 LARGE SUBUNIT"/>
    <property type="match status" value="1"/>
</dbReference>
<dbReference type="Pfam" id="PF02601">
    <property type="entry name" value="Exonuc_VII_L"/>
    <property type="match status" value="2"/>
</dbReference>
<dbReference type="Pfam" id="PF13742">
    <property type="entry name" value="tRNA_anti_2"/>
    <property type="match status" value="1"/>
</dbReference>
<protein>
    <recommendedName>
        <fullName evidence="1">Exodeoxyribonuclease 7 large subunit</fullName>
        <ecNumber evidence="1">3.1.11.6</ecNumber>
    </recommendedName>
    <alternativeName>
        <fullName evidence="1">Exodeoxyribonuclease VII large subunit</fullName>
        <shortName evidence="1">Exonuclease VII large subunit</shortName>
    </alternativeName>
</protein>
<evidence type="ECO:0000255" key="1">
    <source>
        <dbReference type="HAMAP-Rule" id="MF_00378"/>
    </source>
</evidence>